<protein>
    <recommendedName>
        <fullName evidence="2">5-hmdU DNA kinase</fullName>
    </recommendedName>
    <alternativeName>
        <fullName evidence="2">5-hydroxymethyluracil DNA kinase</fullName>
    </alternativeName>
    <alternativeName>
        <fullName evidence="2">P-loop kinase</fullName>
    </alternativeName>
    <alternativeName>
        <fullName>gp37</fullName>
    </alternativeName>
</protein>
<feature type="chain" id="PRO_0000456267" description="5-hmdU DNA kinase">
    <location>
        <begin position="1"/>
        <end position="261"/>
    </location>
</feature>
<organism>
    <name type="scientific">Delftia phage PhiW-14</name>
    <name type="common">Deftia acidovorans bacteriophage phiW-14</name>
    <dbReference type="NCBI Taxonomy" id="665032"/>
    <lineage>
        <taxon>Viruses</taxon>
        <taxon>Duplodnaviria</taxon>
        <taxon>Heunggongvirae</taxon>
        <taxon>Uroviricota</taxon>
        <taxon>Caudoviricetes</taxon>
        <taxon>Ionavirus</taxon>
        <taxon>Ionavirus W14</taxon>
    </lineage>
</organism>
<proteinExistence type="evidence at protein level"/>
<sequence>MSNTLHEGFKFGDPGLINIRGTNGSGKSTIVKRYIPKGAVQKRFDDIGTTYYDCGTHFVVGRYETDCGGLDAVRGTYDPKTGQGIRPFEAGQIAIGRLAPLKTTFAEGVIYGTTFKGSKEVHDELAKTNTPYFWFSIDMPFQEVFDSVLLRRVKSGNADPLSTENIAKKFRPVLASLDKAVDAGLWTIYGHRDVIAQNVDDLVNNRPLTNADLIGRKPDLTKFNKEAQVWFDKGTVSPTQEMIDEHFPKPTTHGLGGFFKG</sequence>
<evidence type="ECO:0000269" key="1">
    <source>
    </source>
</evidence>
<evidence type="ECO:0000303" key="2">
    <source>
    </source>
</evidence>
<evidence type="ECO:0000305" key="3"/>
<evidence type="ECO:0000312" key="4">
    <source>
        <dbReference type="EMBL" id="ACV50059.1"/>
    </source>
</evidence>
<accession>C9DG08</accession>
<organismHost>
    <name type="scientific">Delftia acidovorans</name>
    <name type="common">Pseudomonas acidovorans</name>
    <name type="synonym">Comamonas acidovorans</name>
    <dbReference type="NCBI Taxonomy" id="80866"/>
</organismHost>
<gene>
    <name evidence="4" type="primary">37</name>
</gene>
<reference key="1">
    <citation type="submission" date="2009-07" db="EMBL/GenBank/DDBJ databases">
        <authorList>
            <person name="Kropinski A.M."/>
            <person name="Villegas A."/>
            <person name="Lingohr E.J."/>
        </authorList>
    </citation>
    <scope>NUCLEOTIDE SEQUENCE [LARGE SCALE GENOMIC DNA]</scope>
</reference>
<reference key="2">
    <citation type="journal article" date="2021" name="Nucleic Acids Res.">
        <title>Pathways of thymidine hypermodification.</title>
        <authorList>
            <person name="Lee Y.J."/>
            <person name="Dai N."/>
            <person name="Mueller S.I."/>
            <person name="Guan C."/>
            <person name="Parker M.J."/>
            <person name="Fraser M.E."/>
            <person name="Walsh S.E."/>
            <person name="Sridar J."/>
            <person name="Mulholland A."/>
            <person name="Nayak K."/>
            <person name="Sun Z."/>
            <person name="Lin Y.C."/>
            <person name="Comb D.G."/>
            <person name="Marks K."/>
            <person name="Gonzalez R."/>
            <person name="Dowling D.P."/>
            <person name="Bandarian V."/>
            <person name="Saleh L."/>
            <person name="Correa I.R."/>
            <person name="Weigele P.R."/>
        </authorList>
    </citation>
    <scope>FUNCTION</scope>
    <scope>CATALYTIC ACTIVITY</scope>
</reference>
<dbReference type="EMBL" id="GQ357915">
    <property type="protein sequence ID" value="ACV50059.1"/>
    <property type="molecule type" value="Genomic_DNA"/>
</dbReference>
<dbReference type="RefSeq" id="YP_003358891.1">
    <property type="nucleotide sequence ID" value="NC_013697.1"/>
</dbReference>
<dbReference type="GeneID" id="8683983"/>
<dbReference type="KEGG" id="vg:8683983"/>
<dbReference type="OrthoDB" id="29299at10239"/>
<dbReference type="Proteomes" id="UP000008986">
    <property type="component" value="Genome"/>
</dbReference>
<dbReference type="GO" id="GO:0099018">
    <property type="term" value="P:symbiont-mediated evasion of host restriction-modification system"/>
    <property type="evidence" value="ECO:0007669"/>
    <property type="project" value="UniProtKB-KW"/>
</dbReference>
<dbReference type="GO" id="GO:0052170">
    <property type="term" value="P:symbiont-mediated suppression of host innate immune response"/>
    <property type="evidence" value="ECO:0007669"/>
    <property type="project" value="UniProtKB-KW"/>
</dbReference>
<name>HMUDK_BPW14</name>
<comment type="function">
    <text evidence="1">Phosphorylates 5-hydroxymethyluracil (5hmdU) into 5-phosphomethyl-2'-deoxyuridine (5- PmdU) on DNA as a step in the pathway leading to thymidine hypermodifications in the viral genome (PubMed:34522950). As a final result of the pathway of hypermodification, 5-Nalpha-putrescinylthymidine (Nalpha-PutT) substitutes for about 50% of thymidines in the viral DNA (PubMed:34522950). These modifications probably prevent degradation of viral genome by the host restriction-modification antiviral defense system (PubMed:34522950).</text>
</comment>
<comment type="catalytic activity">
    <reaction evidence="1">
        <text>5-hydroxymethyl-dUMP in DNA + ATP = 5-phosphomethyl-dUMP in DNA + ADP + H(+)</text>
        <dbReference type="Rhea" id="RHEA:71543"/>
        <dbReference type="Rhea" id="RHEA-COMP:18039"/>
        <dbReference type="Rhea" id="RHEA-COMP:18041"/>
        <dbReference type="ChEBI" id="CHEBI:15378"/>
        <dbReference type="ChEBI" id="CHEBI:30616"/>
        <dbReference type="ChEBI" id="CHEBI:190917"/>
        <dbReference type="ChEBI" id="CHEBI:190918"/>
        <dbReference type="ChEBI" id="CHEBI:456216"/>
    </reaction>
</comment>
<comment type="similarity">
    <text evidence="3">Belongs to the thymidylate kinase family. 5-hmdU DNA kinase subfamily.</text>
</comment>
<keyword id="KW-0945">Host-virus interaction</keyword>
<keyword id="KW-1090">Inhibition of host innate immune response by virus</keyword>
<keyword id="KW-1185">Reference proteome</keyword>
<keyword id="KW-1258">Restriction-modification system evasion by virus</keyword>
<keyword id="KW-0899">Viral immunoevasion</keyword>